<name>PDRP_SINFN</name>
<evidence type="ECO:0000255" key="1">
    <source>
        <dbReference type="HAMAP-Rule" id="MF_00921"/>
    </source>
</evidence>
<gene>
    <name type="ordered locus">NGR_c33500</name>
</gene>
<sequence>MENRKNYFHLHLVSDSTGETLIAAGRAAAAQFQSSHALEHVYPLIRNKKQLMQVLDAIDGAPGIVLYTIVDRELAGMIDQRCREIGVPCVSVLDPIIELFQSYLGSPSRRRSGAQHVMDADYFARIEALNFTMDHDDGQMPADFNEADVVLIGVSRTSKTPTSIYLANRGIKTANIPIVPGVPLPDGLLRATKPLVVGLIASADRLSQVRQHRVLGTTQSFHGEEYTDRAAISEELKYARTLCARNNWPLIDVTRRSIEETAAAIVALRPRLR</sequence>
<feature type="chain" id="PRO_1000149713" description="Putative pyruvate, phosphate dikinase regulatory protein">
    <location>
        <begin position="1"/>
        <end position="273"/>
    </location>
</feature>
<feature type="binding site" evidence="1">
    <location>
        <begin position="153"/>
        <end position="160"/>
    </location>
    <ligand>
        <name>ADP</name>
        <dbReference type="ChEBI" id="CHEBI:456216"/>
    </ligand>
</feature>
<organism>
    <name type="scientific">Sinorhizobium fredii (strain NBRC 101917 / NGR234)</name>
    <dbReference type="NCBI Taxonomy" id="394"/>
    <lineage>
        <taxon>Bacteria</taxon>
        <taxon>Pseudomonadati</taxon>
        <taxon>Pseudomonadota</taxon>
        <taxon>Alphaproteobacteria</taxon>
        <taxon>Hyphomicrobiales</taxon>
        <taxon>Rhizobiaceae</taxon>
        <taxon>Sinorhizobium/Ensifer group</taxon>
        <taxon>Sinorhizobium</taxon>
    </lineage>
</organism>
<reference key="1">
    <citation type="journal article" date="2009" name="Appl. Environ. Microbiol.">
        <title>Rhizobium sp. strain NGR234 possesses a remarkable number of secretion systems.</title>
        <authorList>
            <person name="Schmeisser C."/>
            <person name="Liesegang H."/>
            <person name="Krysciak D."/>
            <person name="Bakkou N."/>
            <person name="Le Quere A."/>
            <person name="Wollherr A."/>
            <person name="Heinemeyer I."/>
            <person name="Morgenstern B."/>
            <person name="Pommerening-Roeser A."/>
            <person name="Flores M."/>
            <person name="Palacios R."/>
            <person name="Brenner S."/>
            <person name="Gottschalk G."/>
            <person name="Schmitz R.A."/>
            <person name="Broughton W.J."/>
            <person name="Perret X."/>
            <person name="Strittmatter A.W."/>
            <person name="Streit W.R."/>
        </authorList>
    </citation>
    <scope>NUCLEOTIDE SEQUENCE [LARGE SCALE GENOMIC DNA]</scope>
    <source>
        <strain>NBRC 101917 / NGR234</strain>
    </source>
</reference>
<accession>C3MB71</accession>
<protein>
    <recommendedName>
        <fullName evidence="1">Putative pyruvate, phosphate dikinase regulatory protein</fullName>
        <shortName evidence="1">PPDK regulatory protein</shortName>
        <ecNumber evidence="1">2.7.11.32</ecNumber>
        <ecNumber evidence="1">2.7.4.27</ecNumber>
    </recommendedName>
</protein>
<keyword id="KW-0418">Kinase</keyword>
<keyword id="KW-0547">Nucleotide-binding</keyword>
<keyword id="KW-1185">Reference proteome</keyword>
<keyword id="KW-0723">Serine/threonine-protein kinase</keyword>
<keyword id="KW-0808">Transferase</keyword>
<dbReference type="EC" id="2.7.11.32" evidence="1"/>
<dbReference type="EC" id="2.7.4.27" evidence="1"/>
<dbReference type="EMBL" id="CP001389">
    <property type="protein sequence ID" value="ACP27080.1"/>
    <property type="molecule type" value="Genomic_DNA"/>
</dbReference>
<dbReference type="RefSeq" id="WP_012709827.1">
    <property type="nucleotide sequence ID" value="NC_012587.1"/>
</dbReference>
<dbReference type="RefSeq" id="YP_002827833.1">
    <property type="nucleotide sequence ID" value="NC_012587.1"/>
</dbReference>
<dbReference type="SMR" id="C3MB71"/>
<dbReference type="STRING" id="394.NGR_c33500"/>
<dbReference type="KEGG" id="rhi:NGR_c33500"/>
<dbReference type="PATRIC" id="fig|394.7.peg.6195"/>
<dbReference type="eggNOG" id="COG1806">
    <property type="taxonomic scope" value="Bacteria"/>
</dbReference>
<dbReference type="HOGENOM" id="CLU_046206_2_0_5"/>
<dbReference type="OrthoDB" id="9782201at2"/>
<dbReference type="Proteomes" id="UP000001054">
    <property type="component" value="Chromosome"/>
</dbReference>
<dbReference type="GO" id="GO:0043531">
    <property type="term" value="F:ADP binding"/>
    <property type="evidence" value="ECO:0007669"/>
    <property type="project" value="UniProtKB-UniRule"/>
</dbReference>
<dbReference type="GO" id="GO:0005524">
    <property type="term" value="F:ATP binding"/>
    <property type="evidence" value="ECO:0007669"/>
    <property type="project" value="InterPro"/>
</dbReference>
<dbReference type="GO" id="GO:0016776">
    <property type="term" value="F:phosphotransferase activity, phosphate group as acceptor"/>
    <property type="evidence" value="ECO:0007669"/>
    <property type="project" value="UniProtKB-UniRule"/>
</dbReference>
<dbReference type="GO" id="GO:0004674">
    <property type="term" value="F:protein serine/threonine kinase activity"/>
    <property type="evidence" value="ECO:0007669"/>
    <property type="project" value="UniProtKB-UniRule"/>
</dbReference>
<dbReference type="HAMAP" id="MF_00921">
    <property type="entry name" value="PDRP"/>
    <property type="match status" value="1"/>
</dbReference>
<dbReference type="InterPro" id="IPR005177">
    <property type="entry name" value="Kinase-pyrophosphorylase"/>
</dbReference>
<dbReference type="InterPro" id="IPR026565">
    <property type="entry name" value="PPDK_reg"/>
</dbReference>
<dbReference type="NCBIfam" id="NF003742">
    <property type="entry name" value="PRK05339.1"/>
    <property type="match status" value="1"/>
</dbReference>
<dbReference type="PANTHER" id="PTHR31756">
    <property type="entry name" value="PYRUVATE, PHOSPHATE DIKINASE REGULATORY PROTEIN 1, CHLOROPLASTIC"/>
    <property type="match status" value="1"/>
</dbReference>
<dbReference type="PANTHER" id="PTHR31756:SF3">
    <property type="entry name" value="PYRUVATE, PHOSPHATE DIKINASE REGULATORY PROTEIN 1, CHLOROPLASTIC"/>
    <property type="match status" value="1"/>
</dbReference>
<dbReference type="Pfam" id="PF03618">
    <property type="entry name" value="Kinase-PPPase"/>
    <property type="match status" value="1"/>
</dbReference>
<proteinExistence type="inferred from homology"/>
<comment type="function">
    <text evidence="1">Bifunctional serine/threonine kinase and phosphorylase involved in the regulation of the pyruvate, phosphate dikinase (PPDK) by catalyzing its phosphorylation/dephosphorylation.</text>
</comment>
<comment type="catalytic activity">
    <reaction evidence="1">
        <text>N(tele)-phospho-L-histidyl/L-threonyl-[pyruvate, phosphate dikinase] + ADP = N(tele)-phospho-L-histidyl/O-phospho-L-threonyl-[pyruvate, phosphate dikinase] + AMP + H(+)</text>
        <dbReference type="Rhea" id="RHEA:43692"/>
        <dbReference type="Rhea" id="RHEA-COMP:10650"/>
        <dbReference type="Rhea" id="RHEA-COMP:10651"/>
        <dbReference type="ChEBI" id="CHEBI:15378"/>
        <dbReference type="ChEBI" id="CHEBI:30013"/>
        <dbReference type="ChEBI" id="CHEBI:61977"/>
        <dbReference type="ChEBI" id="CHEBI:83586"/>
        <dbReference type="ChEBI" id="CHEBI:456215"/>
        <dbReference type="ChEBI" id="CHEBI:456216"/>
        <dbReference type="EC" id="2.7.11.32"/>
    </reaction>
</comment>
<comment type="catalytic activity">
    <reaction evidence="1">
        <text>N(tele)-phospho-L-histidyl/O-phospho-L-threonyl-[pyruvate, phosphate dikinase] + phosphate + H(+) = N(tele)-phospho-L-histidyl/L-threonyl-[pyruvate, phosphate dikinase] + diphosphate</text>
        <dbReference type="Rhea" id="RHEA:43696"/>
        <dbReference type="Rhea" id="RHEA-COMP:10650"/>
        <dbReference type="Rhea" id="RHEA-COMP:10651"/>
        <dbReference type="ChEBI" id="CHEBI:15378"/>
        <dbReference type="ChEBI" id="CHEBI:30013"/>
        <dbReference type="ChEBI" id="CHEBI:33019"/>
        <dbReference type="ChEBI" id="CHEBI:43474"/>
        <dbReference type="ChEBI" id="CHEBI:61977"/>
        <dbReference type="ChEBI" id="CHEBI:83586"/>
        <dbReference type="EC" id="2.7.4.27"/>
    </reaction>
</comment>
<comment type="similarity">
    <text evidence="1">Belongs to the pyruvate, phosphate/water dikinase regulatory protein family. PDRP subfamily.</text>
</comment>